<name>RSMG_VEREI</name>
<evidence type="ECO:0000255" key="1">
    <source>
        <dbReference type="HAMAP-Rule" id="MF_00074"/>
    </source>
</evidence>
<accession>A1WGT3</accession>
<proteinExistence type="inferred from homology"/>
<reference key="1">
    <citation type="submission" date="2006-12" db="EMBL/GenBank/DDBJ databases">
        <title>Complete sequence of chromosome 1 of Verminephrobacter eiseniae EF01-2.</title>
        <authorList>
            <person name="Copeland A."/>
            <person name="Lucas S."/>
            <person name="Lapidus A."/>
            <person name="Barry K."/>
            <person name="Detter J.C."/>
            <person name="Glavina del Rio T."/>
            <person name="Dalin E."/>
            <person name="Tice H."/>
            <person name="Pitluck S."/>
            <person name="Chertkov O."/>
            <person name="Brettin T."/>
            <person name="Bruce D."/>
            <person name="Han C."/>
            <person name="Tapia R."/>
            <person name="Gilna P."/>
            <person name="Schmutz J."/>
            <person name="Larimer F."/>
            <person name="Land M."/>
            <person name="Hauser L."/>
            <person name="Kyrpides N."/>
            <person name="Kim E."/>
            <person name="Stahl D."/>
            <person name="Richardson P."/>
        </authorList>
    </citation>
    <scope>NUCLEOTIDE SEQUENCE [LARGE SCALE GENOMIC DNA]</scope>
    <source>
        <strain>EF01-2</strain>
    </source>
</reference>
<organism>
    <name type="scientific">Verminephrobacter eiseniae (strain EF01-2)</name>
    <dbReference type="NCBI Taxonomy" id="391735"/>
    <lineage>
        <taxon>Bacteria</taxon>
        <taxon>Pseudomonadati</taxon>
        <taxon>Pseudomonadota</taxon>
        <taxon>Betaproteobacteria</taxon>
        <taxon>Burkholderiales</taxon>
        <taxon>Comamonadaceae</taxon>
        <taxon>Verminephrobacter</taxon>
    </lineage>
</organism>
<protein>
    <recommendedName>
        <fullName evidence="1">Ribosomal RNA small subunit methyltransferase G</fullName>
        <ecNumber evidence="1">2.1.1.170</ecNumber>
    </recommendedName>
    <alternativeName>
        <fullName evidence="1">16S rRNA 7-methylguanosine methyltransferase</fullName>
        <shortName evidence="1">16S rRNA m7G methyltransferase</shortName>
    </alternativeName>
</protein>
<keyword id="KW-0963">Cytoplasm</keyword>
<keyword id="KW-0489">Methyltransferase</keyword>
<keyword id="KW-1185">Reference proteome</keyword>
<keyword id="KW-0698">rRNA processing</keyword>
<keyword id="KW-0949">S-adenosyl-L-methionine</keyword>
<keyword id="KW-0808">Transferase</keyword>
<feature type="chain" id="PRO_0000335449" description="Ribosomal RNA small subunit methyltransferase G">
    <location>
        <begin position="1"/>
        <end position="239"/>
    </location>
</feature>
<feature type="binding site" evidence="1">
    <location>
        <position position="105"/>
    </location>
    <ligand>
        <name>S-adenosyl-L-methionine</name>
        <dbReference type="ChEBI" id="CHEBI:59789"/>
    </ligand>
</feature>
<feature type="binding site" evidence="1">
    <location>
        <position position="110"/>
    </location>
    <ligand>
        <name>S-adenosyl-L-methionine</name>
        <dbReference type="ChEBI" id="CHEBI:59789"/>
    </ligand>
</feature>
<feature type="binding site" evidence="1">
    <location>
        <begin position="156"/>
        <end position="157"/>
    </location>
    <ligand>
        <name>S-adenosyl-L-methionine</name>
        <dbReference type="ChEBI" id="CHEBI:59789"/>
    </ligand>
</feature>
<feature type="binding site" evidence="1">
    <location>
        <position position="169"/>
    </location>
    <ligand>
        <name>S-adenosyl-L-methionine</name>
        <dbReference type="ChEBI" id="CHEBI:59789"/>
    </ligand>
</feature>
<sequence length="239" mass="25676">MMTSLGNDVLRARLQSGAEVLAPGLDAAQIDRLMDFLALLQKWNRVYNLTALQDPQEMLTQHLLDSLAALAPLRRQLAHLAHLAHSTGLAGPGQGAGPRRLLDVGSGAGLPGVVFAICCPQLDVHCVDSVGKKAAFIGQVALQLRLRNLHGVHARVETLTTPFEIICCRAFAALPDFVRWTRSALRAPDGVWLALKGKHPGAEIAALPADVQVFHVERLTVPGLAAERCIVWLRPAALA</sequence>
<gene>
    <name evidence="1" type="primary">rsmG</name>
    <name type="ordered locus">Veis_1064</name>
</gene>
<comment type="function">
    <text evidence="1">Specifically methylates the N7 position of guanine in position 527 of 16S rRNA.</text>
</comment>
<comment type="catalytic activity">
    <reaction evidence="1">
        <text>guanosine(527) in 16S rRNA + S-adenosyl-L-methionine = N(7)-methylguanosine(527) in 16S rRNA + S-adenosyl-L-homocysteine</text>
        <dbReference type="Rhea" id="RHEA:42732"/>
        <dbReference type="Rhea" id="RHEA-COMP:10209"/>
        <dbReference type="Rhea" id="RHEA-COMP:10210"/>
        <dbReference type="ChEBI" id="CHEBI:57856"/>
        <dbReference type="ChEBI" id="CHEBI:59789"/>
        <dbReference type="ChEBI" id="CHEBI:74269"/>
        <dbReference type="ChEBI" id="CHEBI:74480"/>
        <dbReference type="EC" id="2.1.1.170"/>
    </reaction>
</comment>
<comment type="subcellular location">
    <subcellularLocation>
        <location evidence="1">Cytoplasm</location>
    </subcellularLocation>
</comment>
<comment type="similarity">
    <text evidence="1">Belongs to the methyltransferase superfamily. RNA methyltransferase RsmG family.</text>
</comment>
<dbReference type="EC" id="2.1.1.170" evidence="1"/>
<dbReference type="EMBL" id="CP000542">
    <property type="protein sequence ID" value="ABM56840.1"/>
    <property type="molecule type" value="Genomic_DNA"/>
</dbReference>
<dbReference type="SMR" id="A1WGT3"/>
<dbReference type="STRING" id="391735.Veis_1064"/>
<dbReference type="KEGG" id="vei:Veis_1064"/>
<dbReference type="eggNOG" id="COG0357">
    <property type="taxonomic scope" value="Bacteria"/>
</dbReference>
<dbReference type="HOGENOM" id="CLU_065341_2_0_4"/>
<dbReference type="OrthoDB" id="9808773at2"/>
<dbReference type="Proteomes" id="UP000000374">
    <property type="component" value="Chromosome"/>
</dbReference>
<dbReference type="GO" id="GO:0005829">
    <property type="term" value="C:cytosol"/>
    <property type="evidence" value="ECO:0007669"/>
    <property type="project" value="TreeGrafter"/>
</dbReference>
<dbReference type="GO" id="GO:0070043">
    <property type="term" value="F:rRNA (guanine-N7-)-methyltransferase activity"/>
    <property type="evidence" value="ECO:0007669"/>
    <property type="project" value="UniProtKB-UniRule"/>
</dbReference>
<dbReference type="Gene3D" id="3.40.50.150">
    <property type="entry name" value="Vaccinia Virus protein VP39"/>
    <property type="match status" value="1"/>
</dbReference>
<dbReference type="HAMAP" id="MF_00074">
    <property type="entry name" value="16SrRNA_methyltr_G"/>
    <property type="match status" value="1"/>
</dbReference>
<dbReference type="InterPro" id="IPR003682">
    <property type="entry name" value="rRNA_ssu_MeTfrase_G"/>
</dbReference>
<dbReference type="InterPro" id="IPR029063">
    <property type="entry name" value="SAM-dependent_MTases_sf"/>
</dbReference>
<dbReference type="NCBIfam" id="TIGR00138">
    <property type="entry name" value="rsmG_gidB"/>
    <property type="match status" value="1"/>
</dbReference>
<dbReference type="PANTHER" id="PTHR31760">
    <property type="entry name" value="S-ADENOSYL-L-METHIONINE-DEPENDENT METHYLTRANSFERASES SUPERFAMILY PROTEIN"/>
    <property type="match status" value="1"/>
</dbReference>
<dbReference type="PANTHER" id="PTHR31760:SF0">
    <property type="entry name" value="S-ADENOSYL-L-METHIONINE-DEPENDENT METHYLTRANSFERASES SUPERFAMILY PROTEIN"/>
    <property type="match status" value="1"/>
</dbReference>
<dbReference type="Pfam" id="PF02527">
    <property type="entry name" value="GidB"/>
    <property type="match status" value="1"/>
</dbReference>
<dbReference type="PIRSF" id="PIRSF003078">
    <property type="entry name" value="GidB"/>
    <property type="match status" value="1"/>
</dbReference>
<dbReference type="SUPFAM" id="SSF53335">
    <property type="entry name" value="S-adenosyl-L-methionine-dependent methyltransferases"/>
    <property type="match status" value="1"/>
</dbReference>